<keyword id="KW-1015">Disulfide bond</keyword>
<keyword id="KW-0325">Glycoprotein</keyword>
<keyword id="KW-0326">Glycosidase</keyword>
<keyword id="KW-0378">Hydrolase</keyword>
<keyword id="KW-0964">Secreted</keyword>
<keyword id="KW-0732">Signal</keyword>
<proteinExistence type="inferred from homology"/>
<accession>Q99172</accession>
<reference key="1">
    <citation type="journal article" date="1994" name="Yeast">
        <title>Characterization of MEL genes in the genus Zygosaccharomyces.</title>
        <authorList>
            <person name="Turakainen H."/>
            <person name="Hankaanpaa M."/>
            <person name="Korhola M."/>
            <person name="Aho S."/>
        </authorList>
    </citation>
    <scope>NUCLEOTIDE SEQUENCE [GENOMIC DNA]</scope>
</reference>
<sequence>MFPFFFALFFSSTDVLAASPSYNGLGLTPQMGWDNWNSFGCSVKEELLLGTAEKIVKLGLKDLGYNYIILDDCWSSGRSSNGSLLADDSKFPHGMKYVAEQLHNSQLKFGMYSSAGEYTCAGYAGSLGYEDMDAATFASWDVDYLKYDNCYNKGEFGTPEISYKRYKAMSDALNKTGRPIFYSLCNWGQDLTFYWGSAISNSWRMSGDVYPQFDRPDSRCPCSGDEYDCSYPGFHCSIMNILNKAAPMGQNAAPGGWNDLDMLEVGVGNMSDSEEVAHFSMWAIVKSPLIIGADIDDLKDSSLSVYSNPAVIAINQDVLGTPATRIWKYHVSDKDQYGEGEIQLWSGPLDNGDHVVALLNGGNNERSMNASWNDIFIDYLADSDELSNTWGLYDLWARRMSNATAASILSGNMTSAGLNYNVTQLNYTAGIARNDSRLFGDRVVELSKGESLTATVPGHGVALFRLRPE</sequence>
<gene>
    <name type="primary">MEL</name>
</gene>
<dbReference type="EC" id="3.2.1.22"/>
<dbReference type="EMBL" id="L24957">
    <property type="protein sequence ID" value="AAA35280.1"/>
    <property type="molecule type" value="Genomic_DNA"/>
</dbReference>
<dbReference type="PIR" id="S45453">
    <property type="entry name" value="S45453"/>
</dbReference>
<dbReference type="SMR" id="Q99172"/>
<dbReference type="CAZy" id="GH27">
    <property type="family name" value="Glycoside Hydrolase Family 27"/>
</dbReference>
<dbReference type="GlyCosmos" id="Q99172">
    <property type="glycosylation" value="9 sites, No reported glycans"/>
</dbReference>
<dbReference type="GO" id="GO:0005576">
    <property type="term" value="C:extracellular region"/>
    <property type="evidence" value="ECO:0007669"/>
    <property type="project" value="UniProtKB-SubCell"/>
</dbReference>
<dbReference type="GO" id="GO:0004557">
    <property type="term" value="F:alpha-galactosidase activity"/>
    <property type="evidence" value="ECO:0007669"/>
    <property type="project" value="UniProtKB-EC"/>
</dbReference>
<dbReference type="GO" id="GO:0005995">
    <property type="term" value="P:melibiose catabolic process"/>
    <property type="evidence" value="ECO:0007669"/>
    <property type="project" value="UniProtKB-ARBA"/>
</dbReference>
<dbReference type="CDD" id="cd14792">
    <property type="entry name" value="GH27"/>
    <property type="match status" value="1"/>
</dbReference>
<dbReference type="FunFam" id="3.20.20.70:FF:000202">
    <property type="entry name" value="Alpha-galactosidase"/>
    <property type="match status" value="1"/>
</dbReference>
<dbReference type="Gene3D" id="3.20.20.70">
    <property type="entry name" value="Aldolase class I"/>
    <property type="match status" value="1"/>
</dbReference>
<dbReference type="Gene3D" id="2.60.40.1180">
    <property type="entry name" value="Golgi alpha-mannosidase II"/>
    <property type="match status" value="1"/>
</dbReference>
<dbReference type="InterPro" id="IPR013785">
    <property type="entry name" value="Aldolase_TIM"/>
</dbReference>
<dbReference type="InterPro" id="IPR002241">
    <property type="entry name" value="Glyco_hydro_27"/>
</dbReference>
<dbReference type="InterPro" id="IPR000111">
    <property type="entry name" value="Glyco_hydro_27/36_CS"/>
</dbReference>
<dbReference type="InterPro" id="IPR013780">
    <property type="entry name" value="Glyco_hydro_b"/>
</dbReference>
<dbReference type="InterPro" id="IPR006215">
    <property type="entry name" value="Glyco_hydro_melibiase"/>
</dbReference>
<dbReference type="InterPro" id="IPR017853">
    <property type="entry name" value="Glycoside_hydrolase_SF"/>
</dbReference>
<dbReference type="InterPro" id="IPR041233">
    <property type="entry name" value="Melibiase_C"/>
</dbReference>
<dbReference type="PANTHER" id="PTHR11452:SF75">
    <property type="entry name" value="ALPHA-GALACTOSIDASE MEL1"/>
    <property type="match status" value="1"/>
</dbReference>
<dbReference type="PANTHER" id="PTHR11452">
    <property type="entry name" value="ALPHA-GALACTOSIDASE/ALPHA-N-ACETYLGALACTOSAMINIDASE"/>
    <property type="match status" value="1"/>
</dbReference>
<dbReference type="Pfam" id="PF16499">
    <property type="entry name" value="Melibiase_2"/>
    <property type="match status" value="1"/>
</dbReference>
<dbReference type="Pfam" id="PF17801">
    <property type="entry name" value="Melibiase_C"/>
    <property type="match status" value="1"/>
</dbReference>
<dbReference type="PRINTS" id="PR00740">
    <property type="entry name" value="GLHYDRLASE27"/>
</dbReference>
<dbReference type="PRINTS" id="PR00748">
    <property type="entry name" value="MELIBIASE"/>
</dbReference>
<dbReference type="SUPFAM" id="SSF51445">
    <property type="entry name" value="(Trans)glycosidases"/>
    <property type="match status" value="1"/>
</dbReference>
<dbReference type="SUPFAM" id="SSF51011">
    <property type="entry name" value="Glycosyl hydrolase domain"/>
    <property type="match status" value="1"/>
</dbReference>
<dbReference type="PROSITE" id="PS00512">
    <property type="entry name" value="ALPHA_GALACTOSIDASE"/>
    <property type="match status" value="1"/>
</dbReference>
<organism>
    <name type="scientific">Lachancea cidri</name>
    <name type="common">Yeast</name>
    <name type="synonym">Zygosaccharomyces cidri</name>
    <dbReference type="NCBI Taxonomy" id="29831"/>
    <lineage>
        <taxon>Eukaryota</taxon>
        <taxon>Fungi</taxon>
        <taxon>Dikarya</taxon>
        <taxon>Ascomycota</taxon>
        <taxon>Saccharomycotina</taxon>
        <taxon>Saccharomycetes</taxon>
        <taxon>Saccharomycetales</taxon>
        <taxon>Saccharomycetaceae</taxon>
        <taxon>Lachancea</taxon>
    </lineage>
</organism>
<protein>
    <recommendedName>
        <fullName>Alpha-galactosidase</fullName>
        <ecNumber>3.2.1.22</ecNumber>
    </recommendedName>
    <alternativeName>
        <fullName>Alpha-D-galactoside galactohydrolase</fullName>
    </alternativeName>
    <alternativeName>
        <fullName>Melibiase</fullName>
    </alternativeName>
</protein>
<comment type="catalytic activity">
    <reaction>
        <text>Hydrolysis of terminal, non-reducing alpha-D-galactose residues in alpha-D-galactosides, including galactose oligosaccharides, galactomannans and galactolipids.</text>
        <dbReference type="EC" id="3.2.1.22"/>
    </reaction>
</comment>
<comment type="subunit">
    <text evidence="1">Homotetramer.</text>
</comment>
<comment type="subcellular location">
    <subcellularLocation>
        <location evidence="1">Secreted</location>
    </subcellularLocation>
</comment>
<comment type="similarity">
    <text evidence="3">Belongs to the glycosyl hydrolase 27 family.</text>
</comment>
<name>MEL_LACCI</name>
<feature type="signal peptide" evidence="2">
    <location>
        <begin position="1"/>
        <end position="17"/>
    </location>
</feature>
<feature type="chain" id="PRO_0000001011" description="Alpha-galactosidase">
    <location>
        <begin position="18"/>
        <end position="469"/>
    </location>
</feature>
<feature type="active site" description="Nucleophile" evidence="1">
    <location>
        <position position="148"/>
    </location>
</feature>
<feature type="active site" description="Proton donor" evidence="1">
    <location>
        <position position="208"/>
    </location>
</feature>
<feature type="binding site" evidence="1">
    <location>
        <position position="71"/>
    </location>
    <ligand>
        <name>substrate</name>
    </ligand>
</feature>
<feature type="binding site" evidence="1">
    <location>
        <position position="72"/>
    </location>
    <ligand>
        <name>substrate</name>
    </ligand>
</feature>
<feature type="binding site" evidence="1">
    <location>
        <position position="146"/>
    </location>
    <ligand>
        <name>substrate</name>
    </ligand>
</feature>
<feature type="binding site" evidence="1">
    <location>
        <position position="204"/>
    </location>
    <ligand>
        <name>substrate</name>
    </ligand>
</feature>
<feature type="binding site" evidence="1">
    <location>
        <position position="250"/>
    </location>
    <ligand>
        <name>substrate</name>
    </ligand>
</feature>
<feature type="glycosylation site" description="N-linked (GlcNAc...) asparagine" evidence="2">
    <location>
        <position position="81"/>
    </location>
</feature>
<feature type="glycosylation site" description="N-linked (GlcNAc...) asparagine" evidence="2">
    <location>
        <position position="174"/>
    </location>
</feature>
<feature type="glycosylation site" description="N-linked (GlcNAc...) asparagine" evidence="2">
    <location>
        <position position="269"/>
    </location>
</feature>
<feature type="glycosylation site" description="N-linked (GlcNAc...) asparagine" evidence="2">
    <location>
        <position position="369"/>
    </location>
</feature>
<feature type="glycosylation site" description="N-linked (GlcNAc...) asparagine" evidence="2">
    <location>
        <position position="402"/>
    </location>
</feature>
<feature type="glycosylation site" description="N-linked (GlcNAc...) asparagine" evidence="2">
    <location>
        <position position="412"/>
    </location>
</feature>
<feature type="glycosylation site" description="N-linked (GlcNAc...) asparagine" evidence="2">
    <location>
        <position position="421"/>
    </location>
</feature>
<feature type="glycosylation site" description="N-linked (GlcNAc...) asparagine" evidence="2">
    <location>
        <position position="426"/>
    </location>
</feature>
<feature type="glycosylation site" description="N-linked (GlcNAc...) asparagine" evidence="2">
    <location>
        <position position="434"/>
    </location>
</feature>
<feature type="disulfide bond" evidence="1">
    <location>
        <begin position="41"/>
        <end position="73"/>
    </location>
</feature>
<feature type="disulfide bond" evidence="1">
    <location>
        <begin position="120"/>
        <end position="150"/>
    </location>
</feature>
<feature type="disulfide bond" evidence="1">
    <location>
        <begin position="220"/>
        <end position="236"/>
    </location>
</feature>
<feature type="disulfide bond" evidence="1">
    <location>
        <begin position="222"/>
        <end position="229"/>
    </location>
</feature>
<evidence type="ECO:0000250" key="1"/>
<evidence type="ECO:0000255" key="2"/>
<evidence type="ECO:0000305" key="3"/>